<feature type="initiator methionine" description="Removed" evidence="2">
    <location>
        <position position="1"/>
    </location>
</feature>
<feature type="chain" id="PRO_0000277854" description="Polycomb group RING finger protein 1">
    <location>
        <begin position="2"/>
        <end position="259"/>
    </location>
</feature>
<feature type="zinc finger region" description="RING-type" evidence="3">
    <location>
        <begin position="47"/>
        <end position="86"/>
    </location>
</feature>
<feature type="region of interest" description="Necessary for repressor activity" evidence="1">
    <location>
        <begin position="86"/>
        <end position="247"/>
    </location>
</feature>
<feature type="region of interest" description="Required for the interaction with the KDM2B-SKP1 heterodimeric complex" evidence="2">
    <location>
        <begin position="150"/>
        <end position="255"/>
    </location>
</feature>
<feature type="region of interest" description="RING-finger and WD40-associated ubiquitin-like domain (RAWUL); sufficient for interaction with BCOR and BCORL1" evidence="2">
    <location>
        <begin position="167"/>
        <end position="255"/>
    </location>
</feature>
<feature type="modified residue" description="N-acetylalanine" evidence="2">
    <location>
        <position position="2"/>
    </location>
</feature>
<feature type="modified residue" description="Phosphoserine" evidence="2">
    <location>
        <position position="3"/>
    </location>
</feature>
<feature type="cross-link" description="Glycyl lysine isopeptide (Lys-Gly) (interchain with G-Cter in SUMO2)" evidence="2">
    <location>
        <position position="24"/>
    </location>
</feature>
<feature type="cross-link" description="Glycyl lysine isopeptide (Lys-Gly) (interchain with G-Cter in SUMO2)" evidence="2">
    <location>
        <position position="88"/>
    </location>
</feature>
<gene>
    <name type="primary">PCGF1</name>
</gene>
<comment type="function">
    <text evidence="2">Component of the Polycomb group (PcG) multiprotein BCOR complex, a complex required to maintain the transcriptionally repressive state of some genes, such as BCL6 and the cyclin-dependent kinase inhibitor, CDKN1A. Transcriptional repressor that may be targeted to the DNA by BCL6; this transcription repressor activity may be related to PKC signaling pathway. Represses CDKN1A expression by binding to its promoter, and this repression is dependent on the retinoic acid response element (RARE element). Promotes cell cycle progression and enhances cell proliferation as well. May have a positive role in tumor cell growth by down-regulating CDKN1A. Component of a Polycomb group (PcG) multiprotein PRC1-like complex, a complex class required to maintain the transcriptionally repressive state of many genes, including Hox genes, throughout development. PcG PRC1 complex acts via chromatin remodeling and modification of histones; it mediates monoubiquitination of histone H2A 'Lys-119', rendering chromatin heritably changed in its expressibility. Within the PRC1-like complex, regulates RNF2 ubiquitin ligase activity. Regulates the expression of DPPA4 and NANOG in the NT2 embryonic carcinoma cells.</text>
</comment>
<comment type="subunit">
    <text evidence="2">Interacts with BCORL1, forming heterodimers (By similarity). The PCGF1-BCORL1 heterodimeric complex interacts with the KDM2B-SKP1 heterodimeric complex to form a homotetrameric polycomb repression complex 1 (PRC1.1) (By similarity). Component of the repressive BCOR complex containing a Polycomb group subcomplex at least composed of RYBP, RING1 and RNF2/RING2 (By similarity). Specifically interacts with BCOR, RING1 and RNF2/RING2 (By similarity). Component of a PRC1-like complex (By similarity). Interacts with CBX6, CBX7 and CBX8 (By similarity). Interacts with DPPA4, NANOG, POU5F1 and RYBP (By similarity).</text>
</comment>
<comment type="subcellular location">
    <subcellularLocation>
        <location evidence="2">Nucleus</location>
    </subcellularLocation>
</comment>
<comment type="sequence caution" evidence="4">
    <conflict type="erroneous initiation">
        <sequence resource="EMBL-CDS" id="AAI10243"/>
    </conflict>
    <text>Truncated N-terminus.</text>
</comment>
<reference key="1">
    <citation type="submission" date="2005-11" db="EMBL/GenBank/DDBJ databases">
        <authorList>
            <consortium name="NIH - Mammalian Gene Collection (MGC) project"/>
        </authorList>
    </citation>
    <scope>NUCLEOTIDE SEQUENCE [LARGE SCALE MRNA]</scope>
    <source>
        <strain>Crossbred X Angus</strain>
        <tissue>Liver</tissue>
    </source>
</reference>
<organism>
    <name type="scientific">Bos taurus</name>
    <name type="common">Bovine</name>
    <dbReference type="NCBI Taxonomy" id="9913"/>
    <lineage>
        <taxon>Eukaryota</taxon>
        <taxon>Metazoa</taxon>
        <taxon>Chordata</taxon>
        <taxon>Craniata</taxon>
        <taxon>Vertebrata</taxon>
        <taxon>Euteleostomi</taxon>
        <taxon>Mammalia</taxon>
        <taxon>Eutheria</taxon>
        <taxon>Laurasiatheria</taxon>
        <taxon>Artiodactyla</taxon>
        <taxon>Ruminantia</taxon>
        <taxon>Pecora</taxon>
        <taxon>Bovidae</taxon>
        <taxon>Bovinae</taxon>
        <taxon>Bos</taxon>
    </lineage>
</organism>
<sequence length="259" mass="30324">MASPQGGQIAIAMRLRNQLQSVYKMDPLRNEEEVRVKIKDLNEHIVCCLCAGYFVDATTITECLHTFCKSCIVKYLQTSKYCPMCNIKIHETQPLLNHKLDRVMQDIVYKLVPGLQDSEEKRIREFYQSRGLDRVTQPSGEEPALSNLGLPFSSFDHSKAHYYRYDEQLSLCLERLSSGKDKNKSILQNKYVRCSVRAEVRHLRRVLCHRLMLNPQHVQLLFDNEVLPDHMTMKQIWLSHWFGKPSPLLLQYSVKEKRR</sequence>
<proteinExistence type="evidence at transcript level"/>
<accession>Q2YDF9</accession>
<protein>
    <recommendedName>
        <fullName>Polycomb group RING finger protein 1</fullName>
    </recommendedName>
</protein>
<name>PCGF1_BOVIN</name>
<keyword id="KW-0007">Acetylation</keyword>
<keyword id="KW-1017">Isopeptide bond</keyword>
<keyword id="KW-0479">Metal-binding</keyword>
<keyword id="KW-0539">Nucleus</keyword>
<keyword id="KW-0597">Phosphoprotein</keyword>
<keyword id="KW-1185">Reference proteome</keyword>
<keyword id="KW-0678">Repressor</keyword>
<keyword id="KW-0804">Transcription</keyword>
<keyword id="KW-0805">Transcription regulation</keyword>
<keyword id="KW-0832">Ubl conjugation</keyword>
<keyword id="KW-0862">Zinc</keyword>
<keyword id="KW-0863">Zinc-finger</keyword>
<dbReference type="EMBL" id="BC110242">
    <property type="protein sequence ID" value="AAI10243.1"/>
    <property type="status" value="ALT_INIT"/>
    <property type="molecule type" value="mRNA"/>
</dbReference>
<dbReference type="RefSeq" id="NP_001039912.2">
    <property type="nucleotide sequence ID" value="NM_001046447.2"/>
</dbReference>
<dbReference type="SMR" id="Q2YDF9"/>
<dbReference type="FunCoup" id="Q2YDF9">
    <property type="interactions" value="1855"/>
</dbReference>
<dbReference type="STRING" id="9913.ENSBTAP00000022090"/>
<dbReference type="PaxDb" id="9913-ENSBTAP00000022090"/>
<dbReference type="GeneID" id="539040"/>
<dbReference type="KEGG" id="bta:539040"/>
<dbReference type="CTD" id="84759"/>
<dbReference type="eggNOG" id="KOG2660">
    <property type="taxonomic scope" value="Eukaryota"/>
</dbReference>
<dbReference type="InParanoid" id="Q2YDF9"/>
<dbReference type="OrthoDB" id="1305878at2759"/>
<dbReference type="Proteomes" id="UP000009136">
    <property type="component" value="Unplaced"/>
</dbReference>
<dbReference type="GO" id="GO:0031519">
    <property type="term" value="C:PcG protein complex"/>
    <property type="evidence" value="ECO:0000250"/>
    <property type="project" value="UniProtKB"/>
</dbReference>
<dbReference type="GO" id="GO:0035102">
    <property type="term" value="C:PRC1 complex"/>
    <property type="evidence" value="ECO:0000318"/>
    <property type="project" value="GO_Central"/>
</dbReference>
<dbReference type="GO" id="GO:1990841">
    <property type="term" value="F:promoter-specific chromatin binding"/>
    <property type="evidence" value="ECO:0000318"/>
    <property type="project" value="GO_Central"/>
</dbReference>
<dbReference type="GO" id="GO:0008270">
    <property type="term" value="F:zinc ion binding"/>
    <property type="evidence" value="ECO:0007669"/>
    <property type="project" value="UniProtKB-KW"/>
</dbReference>
<dbReference type="GO" id="GO:0006338">
    <property type="term" value="P:chromatin remodeling"/>
    <property type="evidence" value="ECO:0000250"/>
    <property type="project" value="UniProtKB"/>
</dbReference>
<dbReference type="GO" id="GO:0000122">
    <property type="term" value="P:negative regulation of transcription by RNA polymerase II"/>
    <property type="evidence" value="ECO:0000318"/>
    <property type="project" value="GO_Central"/>
</dbReference>
<dbReference type="CDD" id="cd17081">
    <property type="entry name" value="RAWUL_PCGF1"/>
    <property type="match status" value="1"/>
</dbReference>
<dbReference type="CDD" id="cd16733">
    <property type="entry name" value="RING-HC_PCGF1"/>
    <property type="match status" value="1"/>
</dbReference>
<dbReference type="FunFam" id="3.10.20.90:FF:000099">
    <property type="entry name" value="Polycomb group RING finger protein 1"/>
    <property type="match status" value="1"/>
</dbReference>
<dbReference type="FunFam" id="3.30.40.10:FF:000122">
    <property type="entry name" value="polycomb group RING finger protein 1"/>
    <property type="match status" value="1"/>
</dbReference>
<dbReference type="Gene3D" id="3.10.20.90">
    <property type="entry name" value="Phosphatidylinositol 3-kinase Catalytic Subunit, Chain A, domain 1"/>
    <property type="match status" value="1"/>
</dbReference>
<dbReference type="Gene3D" id="3.30.40.10">
    <property type="entry name" value="Zinc/RING finger domain, C3HC4 (zinc finger)"/>
    <property type="match status" value="1"/>
</dbReference>
<dbReference type="InterPro" id="IPR032443">
    <property type="entry name" value="RAWUL"/>
</dbReference>
<dbReference type="InterPro" id="IPR001841">
    <property type="entry name" value="Znf_RING"/>
</dbReference>
<dbReference type="InterPro" id="IPR013083">
    <property type="entry name" value="Znf_RING/FYVE/PHD"/>
</dbReference>
<dbReference type="InterPro" id="IPR017907">
    <property type="entry name" value="Znf_RING_CS"/>
</dbReference>
<dbReference type="PANTHER" id="PTHR10825:SF29">
    <property type="entry name" value="POLYCOMB GROUP RING FINGER PROTEIN 1"/>
    <property type="match status" value="1"/>
</dbReference>
<dbReference type="PANTHER" id="PTHR10825">
    <property type="entry name" value="RING FINGER DOMAIN-CONTAINING, POLYCOMB GROUP COMPONENT"/>
    <property type="match status" value="1"/>
</dbReference>
<dbReference type="Pfam" id="PF16207">
    <property type="entry name" value="RAWUL"/>
    <property type="match status" value="1"/>
</dbReference>
<dbReference type="Pfam" id="PF13923">
    <property type="entry name" value="zf-C3HC4_2"/>
    <property type="match status" value="1"/>
</dbReference>
<dbReference type="SMART" id="SM00184">
    <property type="entry name" value="RING"/>
    <property type="match status" value="1"/>
</dbReference>
<dbReference type="SUPFAM" id="SSF57850">
    <property type="entry name" value="RING/U-box"/>
    <property type="match status" value="1"/>
</dbReference>
<dbReference type="PROSITE" id="PS00518">
    <property type="entry name" value="ZF_RING_1"/>
    <property type="match status" value="1"/>
</dbReference>
<dbReference type="PROSITE" id="PS50089">
    <property type="entry name" value="ZF_RING_2"/>
    <property type="match status" value="1"/>
</dbReference>
<evidence type="ECO:0000250" key="1"/>
<evidence type="ECO:0000250" key="2">
    <source>
        <dbReference type="UniProtKB" id="Q9BSM1"/>
    </source>
</evidence>
<evidence type="ECO:0000255" key="3">
    <source>
        <dbReference type="PROSITE-ProRule" id="PRU00175"/>
    </source>
</evidence>
<evidence type="ECO:0000305" key="4"/>